<dbReference type="EC" id="2.3.1.181" evidence="1"/>
<dbReference type="EMBL" id="CP000249">
    <property type="protein sequence ID" value="ABD11507.1"/>
    <property type="molecule type" value="Genomic_DNA"/>
</dbReference>
<dbReference type="SMR" id="Q2JB35"/>
<dbReference type="STRING" id="106370.Francci3_2135"/>
<dbReference type="KEGG" id="fra:Francci3_2135"/>
<dbReference type="eggNOG" id="COG0321">
    <property type="taxonomic scope" value="Bacteria"/>
</dbReference>
<dbReference type="HOGENOM" id="CLU_035168_3_0_11"/>
<dbReference type="OrthoDB" id="9787061at2"/>
<dbReference type="PhylomeDB" id="Q2JB35"/>
<dbReference type="UniPathway" id="UPA00538">
    <property type="reaction ID" value="UER00592"/>
</dbReference>
<dbReference type="Proteomes" id="UP000001937">
    <property type="component" value="Chromosome"/>
</dbReference>
<dbReference type="GO" id="GO:0005737">
    <property type="term" value="C:cytoplasm"/>
    <property type="evidence" value="ECO:0007669"/>
    <property type="project" value="UniProtKB-SubCell"/>
</dbReference>
<dbReference type="GO" id="GO:0033819">
    <property type="term" value="F:lipoyl(octanoyl) transferase activity"/>
    <property type="evidence" value="ECO:0007669"/>
    <property type="project" value="UniProtKB-EC"/>
</dbReference>
<dbReference type="GO" id="GO:0036211">
    <property type="term" value="P:protein modification process"/>
    <property type="evidence" value="ECO:0007669"/>
    <property type="project" value="InterPro"/>
</dbReference>
<dbReference type="CDD" id="cd16444">
    <property type="entry name" value="LipB"/>
    <property type="match status" value="1"/>
</dbReference>
<dbReference type="Gene3D" id="3.30.930.10">
    <property type="entry name" value="Bira Bifunctional Protein, Domain 2"/>
    <property type="match status" value="1"/>
</dbReference>
<dbReference type="HAMAP" id="MF_00013">
    <property type="entry name" value="LipB"/>
    <property type="match status" value="1"/>
</dbReference>
<dbReference type="InterPro" id="IPR045864">
    <property type="entry name" value="aa-tRNA-synth_II/BPL/LPL"/>
</dbReference>
<dbReference type="InterPro" id="IPR004143">
    <property type="entry name" value="BPL_LPL_catalytic"/>
</dbReference>
<dbReference type="InterPro" id="IPR000544">
    <property type="entry name" value="Octanoyltransferase"/>
</dbReference>
<dbReference type="InterPro" id="IPR020605">
    <property type="entry name" value="Octanoyltransferase_CS"/>
</dbReference>
<dbReference type="NCBIfam" id="TIGR00214">
    <property type="entry name" value="lipB"/>
    <property type="match status" value="1"/>
</dbReference>
<dbReference type="PANTHER" id="PTHR10993:SF7">
    <property type="entry name" value="LIPOYLTRANSFERASE 2, MITOCHONDRIAL-RELATED"/>
    <property type="match status" value="1"/>
</dbReference>
<dbReference type="PANTHER" id="PTHR10993">
    <property type="entry name" value="OCTANOYLTRANSFERASE"/>
    <property type="match status" value="1"/>
</dbReference>
<dbReference type="Pfam" id="PF21948">
    <property type="entry name" value="LplA-B_cat"/>
    <property type="match status" value="1"/>
</dbReference>
<dbReference type="PIRSF" id="PIRSF016262">
    <property type="entry name" value="LPLase"/>
    <property type="match status" value="1"/>
</dbReference>
<dbReference type="SUPFAM" id="SSF55681">
    <property type="entry name" value="Class II aaRS and biotin synthetases"/>
    <property type="match status" value="1"/>
</dbReference>
<dbReference type="PROSITE" id="PS51733">
    <property type="entry name" value="BPL_LPL_CATALYTIC"/>
    <property type="match status" value="1"/>
</dbReference>
<dbReference type="PROSITE" id="PS01313">
    <property type="entry name" value="LIPB"/>
    <property type="match status" value="1"/>
</dbReference>
<keyword id="KW-0012">Acyltransferase</keyword>
<keyword id="KW-0963">Cytoplasm</keyword>
<keyword id="KW-1185">Reference proteome</keyword>
<keyword id="KW-0808">Transferase</keyword>
<feature type="chain" id="PRO_0000242724" description="Octanoyltransferase">
    <location>
        <begin position="1"/>
        <end position="221"/>
    </location>
</feature>
<feature type="domain" description="BPL/LPL catalytic" evidence="2">
    <location>
        <begin position="14"/>
        <end position="202"/>
    </location>
</feature>
<feature type="region of interest" description="Disordered" evidence="3">
    <location>
        <begin position="197"/>
        <end position="221"/>
    </location>
</feature>
<feature type="active site" description="Acyl-thioester intermediate" evidence="1">
    <location>
        <position position="159"/>
    </location>
</feature>
<feature type="binding site" evidence="1">
    <location>
        <begin position="54"/>
        <end position="61"/>
    </location>
    <ligand>
        <name>substrate</name>
    </ligand>
</feature>
<feature type="binding site" evidence="1">
    <location>
        <begin position="128"/>
        <end position="130"/>
    </location>
    <ligand>
        <name>substrate</name>
    </ligand>
</feature>
<feature type="binding site" evidence="1">
    <location>
        <begin position="141"/>
        <end position="143"/>
    </location>
    <ligand>
        <name>substrate</name>
    </ligand>
</feature>
<feature type="site" description="Lowers pKa of active site Cys" evidence="1">
    <location>
        <position position="125"/>
    </location>
</feature>
<evidence type="ECO:0000255" key="1">
    <source>
        <dbReference type="HAMAP-Rule" id="MF_00013"/>
    </source>
</evidence>
<evidence type="ECO:0000255" key="2">
    <source>
        <dbReference type="PROSITE-ProRule" id="PRU01067"/>
    </source>
</evidence>
<evidence type="ECO:0000256" key="3">
    <source>
        <dbReference type="SAM" id="MobiDB-lite"/>
    </source>
</evidence>
<name>LIPB_FRACC</name>
<proteinExistence type="inferred from homology"/>
<accession>Q2JB35</accession>
<sequence>MARMRVMVRERIDGVRPDTLWFLSHPPVYTVGKRTPPEHRPLAGLGIPVHETNRGGLLTYHAPGQLVGYVMCHIGAMNAVVPFLRLLEARLVDTVEALGIPAERRDTPPGSVELTGVWTRRTNRKIASIGLRCTRKVTSHGFALNVDCDMRPWTWATPCGMPEVEMTSVQRELTDAGHAVPSMAEVREIAAEMLGARNAPHPPAPNLSSGDLGTGTRAGRT</sequence>
<reference key="1">
    <citation type="journal article" date="2007" name="Genome Res.">
        <title>Genome characteristics of facultatively symbiotic Frankia sp. strains reflect host range and host plant biogeography.</title>
        <authorList>
            <person name="Normand P."/>
            <person name="Lapierre P."/>
            <person name="Tisa L.S."/>
            <person name="Gogarten J.P."/>
            <person name="Alloisio N."/>
            <person name="Bagnarol E."/>
            <person name="Bassi C.A."/>
            <person name="Berry A.M."/>
            <person name="Bickhart D.M."/>
            <person name="Choisne N."/>
            <person name="Couloux A."/>
            <person name="Cournoyer B."/>
            <person name="Cruveiller S."/>
            <person name="Daubin V."/>
            <person name="Demange N."/>
            <person name="Francino M.P."/>
            <person name="Goltsman E."/>
            <person name="Huang Y."/>
            <person name="Kopp O.R."/>
            <person name="Labarre L."/>
            <person name="Lapidus A."/>
            <person name="Lavire C."/>
            <person name="Marechal J."/>
            <person name="Martinez M."/>
            <person name="Mastronunzio J.E."/>
            <person name="Mullin B.C."/>
            <person name="Niemann J."/>
            <person name="Pujic P."/>
            <person name="Rawnsley T."/>
            <person name="Rouy Z."/>
            <person name="Schenowitz C."/>
            <person name="Sellstedt A."/>
            <person name="Tavares F."/>
            <person name="Tomkins J.P."/>
            <person name="Vallenet D."/>
            <person name="Valverde C."/>
            <person name="Wall L.G."/>
            <person name="Wang Y."/>
            <person name="Medigue C."/>
            <person name="Benson D.R."/>
        </authorList>
    </citation>
    <scope>NUCLEOTIDE SEQUENCE [LARGE SCALE GENOMIC DNA]</scope>
    <source>
        <strain>DSM 45818 / CECT 9043 / HFP020203 / CcI3</strain>
    </source>
</reference>
<organism>
    <name type="scientific">Frankia casuarinae (strain DSM 45818 / CECT 9043 / HFP020203 / CcI3)</name>
    <dbReference type="NCBI Taxonomy" id="106370"/>
    <lineage>
        <taxon>Bacteria</taxon>
        <taxon>Bacillati</taxon>
        <taxon>Actinomycetota</taxon>
        <taxon>Actinomycetes</taxon>
        <taxon>Frankiales</taxon>
        <taxon>Frankiaceae</taxon>
        <taxon>Frankia</taxon>
    </lineage>
</organism>
<gene>
    <name evidence="1" type="primary">lipB</name>
    <name type="ordered locus">Francci3_2135</name>
</gene>
<protein>
    <recommendedName>
        <fullName evidence="1">Octanoyltransferase</fullName>
        <ecNumber evidence="1">2.3.1.181</ecNumber>
    </recommendedName>
    <alternativeName>
        <fullName evidence="1">Lipoate-protein ligase B</fullName>
    </alternativeName>
    <alternativeName>
        <fullName evidence="1">Lipoyl/octanoyl transferase</fullName>
    </alternativeName>
    <alternativeName>
        <fullName evidence="1">Octanoyl-[acyl-carrier-protein]-protein N-octanoyltransferase</fullName>
    </alternativeName>
</protein>
<comment type="function">
    <text evidence="1">Catalyzes the transfer of endogenously produced octanoic acid from octanoyl-acyl-carrier-protein onto the lipoyl domains of lipoate-dependent enzymes. Lipoyl-ACP can also act as a substrate although octanoyl-ACP is likely to be the physiological substrate.</text>
</comment>
<comment type="catalytic activity">
    <reaction evidence="1">
        <text>octanoyl-[ACP] + L-lysyl-[protein] = N(6)-octanoyl-L-lysyl-[protein] + holo-[ACP] + H(+)</text>
        <dbReference type="Rhea" id="RHEA:17665"/>
        <dbReference type="Rhea" id="RHEA-COMP:9636"/>
        <dbReference type="Rhea" id="RHEA-COMP:9685"/>
        <dbReference type="Rhea" id="RHEA-COMP:9752"/>
        <dbReference type="Rhea" id="RHEA-COMP:9928"/>
        <dbReference type="ChEBI" id="CHEBI:15378"/>
        <dbReference type="ChEBI" id="CHEBI:29969"/>
        <dbReference type="ChEBI" id="CHEBI:64479"/>
        <dbReference type="ChEBI" id="CHEBI:78463"/>
        <dbReference type="ChEBI" id="CHEBI:78809"/>
        <dbReference type="EC" id="2.3.1.181"/>
    </reaction>
</comment>
<comment type="pathway">
    <text evidence="1">Protein modification; protein lipoylation via endogenous pathway; protein N(6)-(lipoyl)lysine from octanoyl-[acyl-carrier-protein]: step 1/2.</text>
</comment>
<comment type="subcellular location">
    <subcellularLocation>
        <location evidence="1">Cytoplasm</location>
    </subcellularLocation>
</comment>
<comment type="miscellaneous">
    <text evidence="1">In the reaction, the free carboxyl group of octanoic acid is attached via an amide linkage to the epsilon-amino group of a specific lysine residue of lipoyl domains of lipoate-dependent enzymes.</text>
</comment>
<comment type="similarity">
    <text evidence="1">Belongs to the LipB family.</text>
</comment>